<comment type="function">
    <text evidence="1">Catalyzes the conversion of pppGpp to ppGpp. Guanosine pentaphosphate (pppGpp) is a cytoplasmic signaling molecule which together with ppGpp controls the 'stringent response', an adaptive process that allows bacteria to respond to amino acid starvation, resulting in the coordinated regulation of numerous cellular activities.</text>
</comment>
<comment type="catalytic activity">
    <reaction evidence="1">
        <text>guanosine 3'-diphosphate 5'-triphosphate + H2O = guanosine 3',5'-bis(diphosphate) + phosphate + H(+)</text>
        <dbReference type="Rhea" id="RHEA:13073"/>
        <dbReference type="ChEBI" id="CHEBI:15377"/>
        <dbReference type="ChEBI" id="CHEBI:15378"/>
        <dbReference type="ChEBI" id="CHEBI:43474"/>
        <dbReference type="ChEBI" id="CHEBI:77828"/>
        <dbReference type="ChEBI" id="CHEBI:142410"/>
        <dbReference type="EC" id="3.6.1.40"/>
    </reaction>
</comment>
<comment type="pathway">
    <text evidence="1">Purine metabolism; ppGpp biosynthesis; ppGpp from GTP: step 2/2.</text>
</comment>
<comment type="similarity">
    <text evidence="1">Belongs to the GppA/Ppx family. GppA subfamily.</text>
</comment>
<dbReference type="EC" id="3.6.1.40" evidence="1"/>
<dbReference type="EMBL" id="AE017220">
    <property type="protein sequence ID" value="AAX67725.1"/>
    <property type="molecule type" value="Genomic_DNA"/>
</dbReference>
<dbReference type="RefSeq" id="WP_011264427.1">
    <property type="nucleotide sequence ID" value="NC_006905.1"/>
</dbReference>
<dbReference type="SMR" id="Q57HT7"/>
<dbReference type="KEGG" id="sec:SCH_3819"/>
<dbReference type="HOGENOM" id="CLU_025908_4_0_6"/>
<dbReference type="UniPathway" id="UPA00908">
    <property type="reaction ID" value="UER00885"/>
</dbReference>
<dbReference type="Proteomes" id="UP000000538">
    <property type="component" value="Chromosome"/>
</dbReference>
<dbReference type="GO" id="GO:0008894">
    <property type="term" value="F:guanosine-5'-triphosphate,3'-diphosphate diphosphatase activity"/>
    <property type="evidence" value="ECO:0007669"/>
    <property type="project" value="UniProtKB-UniRule"/>
</dbReference>
<dbReference type="GO" id="GO:0015974">
    <property type="term" value="P:guanosine pentaphosphate catabolic process"/>
    <property type="evidence" value="ECO:0007669"/>
    <property type="project" value="InterPro"/>
</dbReference>
<dbReference type="GO" id="GO:0015970">
    <property type="term" value="P:guanosine tetraphosphate biosynthetic process"/>
    <property type="evidence" value="ECO:0007669"/>
    <property type="project" value="UniProtKB-UniRule"/>
</dbReference>
<dbReference type="GO" id="GO:0015949">
    <property type="term" value="P:nucleobase-containing small molecule interconversion"/>
    <property type="evidence" value="ECO:0007669"/>
    <property type="project" value="TreeGrafter"/>
</dbReference>
<dbReference type="CDD" id="cd24117">
    <property type="entry name" value="ASKHA_NBD_EcGppA-like"/>
    <property type="match status" value="1"/>
</dbReference>
<dbReference type="FunFam" id="1.10.3210.10:FF:000004">
    <property type="entry name" value="Guanosine-5'-triphosphate,3'-diphosphate pyrophosphatase"/>
    <property type="match status" value="1"/>
</dbReference>
<dbReference type="FunFam" id="3.30.420.150:FF:000001">
    <property type="entry name" value="Guanosine-5'-triphosphate,3'-diphosphate pyrophosphatase"/>
    <property type="match status" value="1"/>
</dbReference>
<dbReference type="FunFam" id="3.30.420.40:FF:000023">
    <property type="entry name" value="Guanosine-5'-triphosphate,3'-diphosphate pyrophosphatase"/>
    <property type="match status" value="1"/>
</dbReference>
<dbReference type="Gene3D" id="3.30.420.40">
    <property type="match status" value="1"/>
</dbReference>
<dbReference type="Gene3D" id="3.30.420.150">
    <property type="entry name" value="Exopolyphosphatase. Domain 2"/>
    <property type="match status" value="1"/>
</dbReference>
<dbReference type="Gene3D" id="1.10.3210.10">
    <property type="entry name" value="Hypothetical protein af1432"/>
    <property type="match status" value="1"/>
</dbReference>
<dbReference type="HAMAP" id="MF_01550">
    <property type="entry name" value="GppA"/>
    <property type="match status" value="1"/>
</dbReference>
<dbReference type="InterPro" id="IPR043129">
    <property type="entry name" value="ATPase_NBD"/>
</dbReference>
<dbReference type="InterPro" id="IPR050273">
    <property type="entry name" value="GppA/Ppx_hydrolase"/>
</dbReference>
<dbReference type="InterPro" id="IPR023709">
    <property type="entry name" value="Guo-5TP_3DP_PyrP"/>
</dbReference>
<dbReference type="InterPro" id="IPR048950">
    <property type="entry name" value="Ppx_GppA_C"/>
</dbReference>
<dbReference type="InterPro" id="IPR003695">
    <property type="entry name" value="Ppx_GppA_N"/>
</dbReference>
<dbReference type="InterPro" id="IPR030673">
    <property type="entry name" value="PyroPPase_GppA_Ppx"/>
</dbReference>
<dbReference type="NCBIfam" id="NF008260">
    <property type="entry name" value="PRK11031.1"/>
    <property type="match status" value="1"/>
</dbReference>
<dbReference type="PANTHER" id="PTHR30005">
    <property type="entry name" value="EXOPOLYPHOSPHATASE"/>
    <property type="match status" value="1"/>
</dbReference>
<dbReference type="PANTHER" id="PTHR30005:SF0">
    <property type="entry name" value="RETROGRADE REGULATION PROTEIN 2"/>
    <property type="match status" value="1"/>
</dbReference>
<dbReference type="Pfam" id="PF02541">
    <property type="entry name" value="Ppx-GppA"/>
    <property type="match status" value="1"/>
</dbReference>
<dbReference type="Pfam" id="PF21447">
    <property type="entry name" value="Ppx-GppA_III"/>
    <property type="match status" value="1"/>
</dbReference>
<dbReference type="PIRSF" id="PIRSF001267">
    <property type="entry name" value="Pyrophosphatase_GppA_Ppx"/>
    <property type="match status" value="1"/>
</dbReference>
<dbReference type="SUPFAM" id="SSF53067">
    <property type="entry name" value="Actin-like ATPase domain"/>
    <property type="match status" value="2"/>
</dbReference>
<dbReference type="SUPFAM" id="SSF109604">
    <property type="entry name" value="HD-domain/PDEase-like"/>
    <property type="match status" value="1"/>
</dbReference>
<sequence>MNSTSLYAAIDLGSNSFHMLVVREAAGSIQTLTRIKRKVRLAAGLNNDNHLSAEAMERGWQCLRLFAERLQDIPQPQIRVVATATLRLAVNAGEFIAKAQTILGCPVQVISGEEEARLIYQGVAHTTGGADQRLVVDIGGASTELVTGTGAQTTSLFSLSMGCVTWLERYFSDRNLAQENFDDAEKAARDVLRPVADELRFHGWKVCVGASGTVQALQEIMMAQGMDERITLAKLQQLKQRAIQCGRLEELEIEGLTLERALVFPSGLAILIAIFTELNIQSMTLAGGALREGLVYGMLHLAVDQDIRSRTLQNIQRRFIVDTDQANRVAKLADNFLKQVENAWHIEPISRELLLSACQLHEIGLSVDFKQAPYHAAYLVRHLDLPGYTPAQKKLLATLLLNQTNPVDLSSLHQQNAVPPRVAEQLCRLLRLAILFAGRRRDDLVPEITLRALNENLTLTLPGDWLAHHPLGKELIDQESQWQSYVHWPLDVR</sequence>
<gene>
    <name evidence="1" type="primary">gppA</name>
    <name type="ordered locus">SCH_3819</name>
</gene>
<reference key="1">
    <citation type="journal article" date="2005" name="Nucleic Acids Res.">
        <title>The genome sequence of Salmonella enterica serovar Choleraesuis, a highly invasive and resistant zoonotic pathogen.</title>
        <authorList>
            <person name="Chiu C.-H."/>
            <person name="Tang P."/>
            <person name="Chu C."/>
            <person name="Hu S."/>
            <person name="Bao Q."/>
            <person name="Yu J."/>
            <person name="Chou Y.-Y."/>
            <person name="Wang H.-S."/>
            <person name="Lee Y.-S."/>
        </authorList>
    </citation>
    <scope>NUCLEOTIDE SEQUENCE [LARGE SCALE GENOMIC DNA]</scope>
    <source>
        <strain>SC-B67</strain>
    </source>
</reference>
<organism>
    <name type="scientific">Salmonella choleraesuis (strain SC-B67)</name>
    <dbReference type="NCBI Taxonomy" id="321314"/>
    <lineage>
        <taxon>Bacteria</taxon>
        <taxon>Pseudomonadati</taxon>
        <taxon>Pseudomonadota</taxon>
        <taxon>Gammaproteobacteria</taxon>
        <taxon>Enterobacterales</taxon>
        <taxon>Enterobacteriaceae</taxon>
        <taxon>Salmonella</taxon>
    </lineage>
</organism>
<keyword id="KW-0378">Hydrolase</keyword>
<name>GPPA_SALCH</name>
<protein>
    <recommendedName>
        <fullName evidence="1">Guanosine-5'-triphosphate,3'-diphosphate pyrophosphatase</fullName>
        <ecNumber evidence="1">3.6.1.40</ecNumber>
    </recommendedName>
    <alternativeName>
        <fullName evidence="1">Guanosine pentaphosphate phosphohydrolase</fullName>
    </alternativeName>
    <alternativeName>
        <fullName evidence="1">pppGpp-5'-phosphohydrolase</fullName>
    </alternativeName>
</protein>
<proteinExistence type="inferred from homology"/>
<feature type="chain" id="PRO_0000194286" description="Guanosine-5'-triphosphate,3'-diphosphate pyrophosphatase">
    <location>
        <begin position="1"/>
        <end position="493"/>
    </location>
</feature>
<accession>Q57HT7</accession>
<evidence type="ECO:0000255" key="1">
    <source>
        <dbReference type="HAMAP-Rule" id="MF_01550"/>
    </source>
</evidence>